<reference key="1">
    <citation type="journal article" date="1998" name="DNA Res.">
        <title>Complete sequence and gene organization of the genome of a hyper-thermophilic archaebacterium, Pyrococcus horikoshii OT3.</title>
        <authorList>
            <person name="Kawarabayasi Y."/>
            <person name="Sawada M."/>
            <person name="Horikawa H."/>
            <person name="Haikawa Y."/>
            <person name="Hino Y."/>
            <person name="Yamamoto S."/>
            <person name="Sekine M."/>
            <person name="Baba S."/>
            <person name="Kosugi H."/>
            <person name="Hosoyama A."/>
            <person name="Nagai Y."/>
            <person name="Sakai M."/>
            <person name="Ogura K."/>
            <person name="Otsuka R."/>
            <person name="Nakazawa H."/>
            <person name="Takamiya M."/>
            <person name="Ohfuku Y."/>
            <person name="Funahashi T."/>
            <person name="Tanaka T."/>
            <person name="Kudoh Y."/>
            <person name="Yamazaki J."/>
            <person name="Kushida N."/>
            <person name="Oguchi A."/>
            <person name="Aoki K."/>
            <person name="Yoshizawa T."/>
            <person name="Nakamura Y."/>
            <person name="Robb F.T."/>
            <person name="Horikoshi K."/>
            <person name="Masuchi Y."/>
            <person name="Shizuya H."/>
            <person name="Kikuchi H."/>
        </authorList>
    </citation>
    <scope>NUCLEOTIDE SEQUENCE [LARGE SCALE GENOMIC DNA]</scope>
    <source>
        <strain>ATCC 700860 / DSM 12428 / JCM 9974 / NBRC 100139 / OT-3</strain>
    </source>
</reference>
<keyword id="KW-0665">Pyrimidine biosynthesis</keyword>
<keyword id="KW-0808">Transferase</keyword>
<gene>
    <name evidence="1" type="primary">pyrB</name>
    <name type="ordered locus">PH0720</name>
</gene>
<protein>
    <recommendedName>
        <fullName evidence="1">Aspartate carbamoyltransferase catalytic subunit</fullName>
        <ecNumber evidence="1">2.1.3.2</ecNumber>
    </recommendedName>
    <alternativeName>
        <fullName evidence="1">Aspartate transcarbamylase</fullName>
        <shortName evidence="1">ATCase</shortName>
    </alternativeName>
</protein>
<comment type="function">
    <text evidence="1">Catalyzes the condensation of carbamoyl phosphate and aspartate to form carbamoyl aspartate and inorganic phosphate, the committed step in the de novo pyrimidine nucleotide biosynthesis pathway.</text>
</comment>
<comment type="catalytic activity">
    <reaction evidence="1">
        <text>carbamoyl phosphate + L-aspartate = N-carbamoyl-L-aspartate + phosphate + H(+)</text>
        <dbReference type="Rhea" id="RHEA:20013"/>
        <dbReference type="ChEBI" id="CHEBI:15378"/>
        <dbReference type="ChEBI" id="CHEBI:29991"/>
        <dbReference type="ChEBI" id="CHEBI:32814"/>
        <dbReference type="ChEBI" id="CHEBI:43474"/>
        <dbReference type="ChEBI" id="CHEBI:58228"/>
        <dbReference type="EC" id="2.1.3.2"/>
    </reaction>
</comment>
<comment type="pathway">
    <text evidence="1">Pyrimidine metabolism; UMP biosynthesis via de novo pathway; (S)-dihydroorotate from bicarbonate: step 2/3.</text>
</comment>
<comment type="subunit">
    <text evidence="1">Heterooligomer of catalytic and regulatory chains.</text>
</comment>
<comment type="similarity">
    <text evidence="1 2">Belongs to the aspartate/ornithine carbamoyltransferase superfamily. ATCase family.</text>
</comment>
<dbReference type="EC" id="2.1.3.2" evidence="1"/>
<dbReference type="EMBL" id="BA000001">
    <property type="protein sequence ID" value="BAA29811.1"/>
    <property type="molecule type" value="Genomic_DNA"/>
</dbReference>
<dbReference type="PIR" id="A71119">
    <property type="entry name" value="A71119"/>
</dbReference>
<dbReference type="RefSeq" id="WP_010884818.1">
    <property type="nucleotide sequence ID" value="NC_000961.1"/>
</dbReference>
<dbReference type="SMR" id="O58451"/>
<dbReference type="STRING" id="70601.gene:9377667"/>
<dbReference type="EnsemblBacteria" id="BAA29811">
    <property type="protein sequence ID" value="BAA29811"/>
    <property type="gene ID" value="BAA29811"/>
</dbReference>
<dbReference type="GeneID" id="1443053"/>
<dbReference type="KEGG" id="pho:PH0720"/>
<dbReference type="eggNOG" id="arCOG00911">
    <property type="taxonomic scope" value="Archaea"/>
</dbReference>
<dbReference type="OrthoDB" id="7792at2157"/>
<dbReference type="UniPathway" id="UPA00070">
    <property type="reaction ID" value="UER00116"/>
</dbReference>
<dbReference type="Proteomes" id="UP000000752">
    <property type="component" value="Chromosome"/>
</dbReference>
<dbReference type="GO" id="GO:0016597">
    <property type="term" value="F:amino acid binding"/>
    <property type="evidence" value="ECO:0007669"/>
    <property type="project" value="InterPro"/>
</dbReference>
<dbReference type="GO" id="GO:0004070">
    <property type="term" value="F:aspartate carbamoyltransferase activity"/>
    <property type="evidence" value="ECO:0007669"/>
    <property type="project" value="UniProtKB-UniRule"/>
</dbReference>
<dbReference type="GO" id="GO:0006207">
    <property type="term" value="P:'de novo' pyrimidine nucleobase biosynthetic process"/>
    <property type="evidence" value="ECO:0007669"/>
    <property type="project" value="InterPro"/>
</dbReference>
<dbReference type="GO" id="GO:0044205">
    <property type="term" value="P:'de novo' UMP biosynthetic process"/>
    <property type="evidence" value="ECO:0007669"/>
    <property type="project" value="UniProtKB-UniRule"/>
</dbReference>
<dbReference type="GO" id="GO:0006520">
    <property type="term" value="P:amino acid metabolic process"/>
    <property type="evidence" value="ECO:0007669"/>
    <property type="project" value="InterPro"/>
</dbReference>
<dbReference type="FunFam" id="3.40.50.1370:FF:000001">
    <property type="entry name" value="Aspartate carbamoyltransferase"/>
    <property type="match status" value="1"/>
</dbReference>
<dbReference type="FunFam" id="3.40.50.1370:FF:000021">
    <property type="entry name" value="Aspartate carbamoyltransferase"/>
    <property type="match status" value="1"/>
</dbReference>
<dbReference type="Gene3D" id="3.40.50.1370">
    <property type="entry name" value="Aspartate/ornithine carbamoyltransferase"/>
    <property type="match status" value="2"/>
</dbReference>
<dbReference type="HAMAP" id="MF_00001">
    <property type="entry name" value="Asp_carb_tr"/>
    <property type="match status" value="1"/>
</dbReference>
<dbReference type="InterPro" id="IPR006132">
    <property type="entry name" value="Asp/Orn_carbamoyltranf_P-bd"/>
</dbReference>
<dbReference type="InterPro" id="IPR006130">
    <property type="entry name" value="Asp/Orn_carbamoylTrfase"/>
</dbReference>
<dbReference type="InterPro" id="IPR036901">
    <property type="entry name" value="Asp/Orn_carbamoylTrfase_sf"/>
</dbReference>
<dbReference type="InterPro" id="IPR002082">
    <property type="entry name" value="Asp_carbamoyltransf"/>
</dbReference>
<dbReference type="InterPro" id="IPR006131">
    <property type="entry name" value="Asp_carbamoyltransf_Asp/Orn-bd"/>
</dbReference>
<dbReference type="NCBIfam" id="TIGR00670">
    <property type="entry name" value="asp_carb_tr"/>
    <property type="match status" value="1"/>
</dbReference>
<dbReference type="NCBIfam" id="NF002032">
    <property type="entry name" value="PRK00856.1"/>
    <property type="match status" value="1"/>
</dbReference>
<dbReference type="PANTHER" id="PTHR45753:SF6">
    <property type="entry name" value="ASPARTATE CARBAMOYLTRANSFERASE"/>
    <property type="match status" value="1"/>
</dbReference>
<dbReference type="PANTHER" id="PTHR45753">
    <property type="entry name" value="ORNITHINE CARBAMOYLTRANSFERASE, MITOCHONDRIAL"/>
    <property type="match status" value="1"/>
</dbReference>
<dbReference type="Pfam" id="PF00185">
    <property type="entry name" value="OTCace"/>
    <property type="match status" value="1"/>
</dbReference>
<dbReference type="Pfam" id="PF02729">
    <property type="entry name" value="OTCace_N"/>
    <property type="match status" value="1"/>
</dbReference>
<dbReference type="PRINTS" id="PR00100">
    <property type="entry name" value="AOTCASE"/>
</dbReference>
<dbReference type="PRINTS" id="PR00101">
    <property type="entry name" value="ATCASE"/>
</dbReference>
<dbReference type="SUPFAM" id="SSF53671">
    <property type="entry name" value="Aspartate/ornithine carbamoyltransferase"/>
    <property type="match status" value="1"/>
</dbReference>
<dbReference type="PROSITE" id="PS00097">
    <property type="entry name" value="CARBAMOYLTRANSFERASE"/>
    <property type="match status" value="1"/>
</dbReference>
<name>PYRB_PYRHO</name>
<accession>O58451</accession>
<feature type="chain" id="PRO_0000113256" description="Aspartate carbamoyltransferase catalytic subunit">
    <location>
        <begin position="1"/>
        <end position="308"/>
    </location>
</feature>
<feature type="binding site" evidence="1">
    <location>
        <position position="57"/>
    </location>
    <ligand>
        <name>carbamoyl phosphate</name>
        <dbReference type="ChEBI" id="CHEBI:58228"/>
    </ligand>
</feature>
<feature type="binding site" evidence="1">
    <location>
        <position position="58"/>
    </location>
    <ligand>
        <name>carbamoyl phosphate</name>
        <dbReference type="ChEBI" id="CHEBI:58228"/>
    </ligand>
</feature>
<feature type="binding site" evidence="1">
    <location>
        <position position="86"/>
    </location>
    <ligand>
        <name>L-aspartate</name>
        <dbReference type="ChEBI" id="CHEBI:29991"/>
    </ligand>
</feature>
<feature type="binding site" evidence="1">
    <location>
        <position position="107"/>
    </location>
    <ligand>
        <name>carbamoyl phosphate</name>
        <dbReference type="ChEBI" id="CHEBI:58228"/>
    </ligand>
</feature>
<feature type="binding site" evidence="1">
    <location>
        <position position="135"/>
    </location>
    <ligand>
        <name>carbamoyl phosphate</name>
        <dbReference type="ChEBI" id="CHEBI:58228"/>
    </ligand>
</feature>
<feature type="binding site" evidence="1">
    <location>
        <position position="138"/>
    </location>
    <ligand>
        <name>carbamoyl phosphate</name>
        <dbReference type="ChEBI" id="CHEBI:58228"/>
    </ligand>
</feature>
<feature type="binding site" evidence="1">
    <location>
        <position position="168"/>
    </location>
    <ligand>
        <name>L-aspartate</name>
        <dbReference type="ChEBI" id="CHEBI:29991"/>
    </ligand>
</feature>
<feature type="binding site" evidence="1">
    <location>
        <position position="229"/>
    </location>
    <ligand>
        <name>L-aspartate</name>
        <dbReference type="ChEBI" id="CHEBI:29991"/>
    </ligand>
</feature>
<feature type="binding site" evidence="1">
    <location>
        <position position="268"/>
    </location>
    <ligand>
        <name>carbamoyl phosphate</name>
        <dbReference type="ChEBI" id="CHEBI:58228"/>
    </ligand>
</feature>
<feature type="binding site" evidence="1">
    <location>
        <position position="269"/>
    </location>
    <ligand>
        <name>carbamoyl phosphate</name>
        <dbReference type="ChEBI" id="CHEBI:58228"/>
    </ligand>
</feature>
<organism>
    <name type="scientific">Pyrococcus horikoshii (strain ATCC 700860 / DSM 12428 / JCM 9974 / NBRC 100139 / OT-3)</name>
    <dbReference type="NCBI Taxonomy" id="70601"/>
    <lineage>
        <taxon>Archaea</taxon>
        <taxon>Methanobacteriati</taxon>
        <taxon>Methanobacteriota</taxon>
        <taxon>Thermococci</taxon>
        <taxon>Thermococcales</taxon>
        <taxon>Thermococcaceae</taxon>
        <taxon>Pyrococcus</taxon>
    </lineage>
</organism>
<sequence>MEWKGRDVISIRDFSKEDIEVVLSTAERLEKEMKEKGQLEYAKGKILATLFFEPSTRTRLSFESAMHRLGGSVIGFAEASTSSVKKGESLRDTIKTVEQYSDVIVIRHPKEGAARLAAEVADIPVINAGDGSNQHPTQTLLDLYTIKKEFGTIDGLKIGLLGDLKYGRTVHSLAEALAFYDVELYLISPELLRMPKHIVEELRERGMKIVETTKLEEVIGELDVLYVTRIQKERFPDEQEYLKVKGSYQVNLKILENVKDSLRIMHPLPRVDEIHPEVDKTKHAIYFKQVFNGVPVRMALLALVLGVI</sequence>
<proteinExistence type="inferred from homology"/>
<evidence type="ECO:0000255" key="1">
    <source>
        <dbReference type="HAMAP-Rule" id="MF_00001"/>
    </source>
</evidence>
<evidence type="ECO:0000305" key="2"/>